<sequence>MAMAKNVVVIGAQWGDEGKGKIVDWLAEEAGGVVRFQGGHNAGHTLVVGGKKTILRLIPSGILHESLDCFIGSGVVVSPEALLGEIDELNAAGVKNVEGRLKIAPTCPLILPYHIALDQAREASRGKGKIGTTGRGIGPAYEDKVARRAIRAADLLHPEKLREKLDAILAYYNVQLQHLHNAEPVKAEDVMAVIEKVALRIAPMITDVSRVLNEKNKNGEKLLFEGAQGALLDIDYGTYPFVTSSNCLAGAASAGAGVGPQMLDYVLGIVKAYTTRVGSGPFPTELFDEVGAGLAERGHEFGSVTGRARRCGWFDAAALKRSIQINGISGMCITKLDVMDGVETINICVGYELPDGGKTDILPCGSDAVETCKPIYETMPGWRESTFGVKSYDALPANAKAYLKRIEEVCGAPVAIVSTGPDREETIVLHHPFA</sequence>
<comment type="function">
    <text evidence="1">Plays an important role in the de novo pathway of purine nucleotide biosynthesis. Catalyzes the first committed step in the biosynthesis of AMP from IMP.</text>
</comment>
<comment type="catalytic activity">
    <reaction evidence="1">
        <text>IMP + L-aspartate + GTP = N(6)-(1,2-dicarboxyethyl)-AMP + GDP + phosphate + 2 H(+)</text>
        <dbReference type="Rhea" id="RHEA:15753"/>
        <dbReference type="ChEBI" id="CHEBI:15378"/>
        <dbReference type="ChEBI" id="CHEBI:29991"/>
        <dbReference type="ChEBI" id="CHEBI:37565"/>
        <dbReference type="ChEBI" id="CHEBI:43474"/>
        <dbReference type="ChEBI" id="CHEBI:57567"/>
        <dbReference type="ChEBI" id="CHEBI:58053"/>
        <dbReference type="ChEBI" id="CHEBI:58189"/>
        <dbReference type="EC" id="6.3.4.4"/>
    </reaction>
</comment>
<comment type="cofactor">
    <cofactor evidence="1">
        <name>Mg(2+)</name>
        <dbReference type="ChEBI" id="CHEBI:18420"/>
    </cofactor>
    <text evidence="1">Binds 1 Mg(2+) ion per subunit.</text>
</comment>
<comment type="pathway">
    <text evidence="1">Purine metabolism; AMP biosynthesis via de novo pathway; AMP from IMP: step 1/2.</text>
</comment>
<comment type="subunit">
    <text evidence="1">Homodimer.</text>
</comment>
<comment type="subcellular location">
    <subcellularLocation>
        <location evidence="1">Cytoplasm</location>
    </subcellularLocation>
</comment>
<comment type="similarity">
    <text evidence="1">Belongs to the adenylosuccinate synthetase family.</text>
</comment>
<dbReference type="EC" id="6.3.4.4" evidence="1"/>
<dbReference type="EMBL" id="AM421808">
    <property type="protein sequence ID" value="CAM10053.1"/>
    <property type="molecule type" value="Genomic_DNA"/>
</dbReference>
<dbReference type="SMR" id="A1KT71"/>
<dbReference type="KEGG" id="nmc:NMC0765"/>
<dbReference type="HOGENOM" id="CLU_029848_0_0_4"/>
<dbReference type="UniPathway" id="UPA00075">
    <property type="reaction ID" value="UER00335"/>
</dbReference>
<dbReference type="Proteomes" id="UP000002286">
    <property type="component" value="Chromosome"/>
</dbReference>
<dbReference type="GO" id="GO:0005737">
    <property type="term" value="C:cytoplasm"/>
    <property type="evidence" value="ECO:0007669"/>
    <property type="project" value="UniProtKB-SubCell"/>
</dbReference>
<dbReference type="GO" id="GO:0004019">
    <property type="term" value="F:adenylosuccinate synthase activity"/>
    <property type="evidence" value="ECO:0007669"/>
    <property type="project" value="UniProtKB-UniRule"/>
</dbReference>
<dbReference type="GO" id="GO:0005525">
    <property type="term" value="F:GTP binding"/>
    <property type="evidence" value="ECO:0007669"/>
    <property type="project" value="UniProtKB-UniRule"/>
</dbReference>
<dbReference type="GO" id="GO:0000287">
    <property type="term" value="F:magnesium ion binding"/>
    <property type="evidence" value="ECO:0007669"/>
    <property type="project" value="UniProtKB-UniRule"/>
</dbReference>
<dbReference type="GO" id="GO:0044208">
    <property type="term" value="P:'de novo' AMP biosynthetic process"/>
    <property type="evidence" value="ECO:0007669"/>
    <property type="project" value="UniProtKB-UniRule"/>
</dbReference>
<dbReference type="GO" id="GO:0046040">
    <property type="term" value="P:IMP metabolic process"/>
    <property type="evidence" value="ECO:0007669"/>
    <property type="project" value="TreeGrafter"/>
</dbReference>
<dbReference type="CDD" id="cd03108">
    <property type="entry name" value="AdSS"/>
    <property type="match status" value="1"/>
</dbReference>
<dbReference type="FunFam" id="1.10.300.10:FF:000001">
    <property type="entry name" value="Adenylosuccinate synthetase"/>
    <property type="match status" value="1"/>
</dbReference>
<dbReference type="FunFam" id="3.90.170.10:FF:000001">
    <property type="entry name" value="Adenylosuccinate synthetase"/>
    <property type="match status" value="1"/>
</dbReference>
<dbReference type="Gene3D" id="3.40.440.10">
    <property type="entry name" value="Adenylosuccinate Synthetase, subunit A, domain 1"/>
    <property type="match status" value="1"/>
</dbReference>
<dbReference type="Gene3D" id="1.10.300.10">
    <property type="entry name" value="Adenylosuccinate Synthetase, subunit A, domain 2"/>
    <property type="match status" value="1"/>
</dbReference>
<dbReference type="Gene3D" id="3.90.170.10">
    <property type="entry name" value="Adenylosuccinate Synthetase, subunit A, domain 3"/>
    <property type="match status" value="1"/>
</dbReference>
<dbReference type="HAMAP" id="MF_00011">
    <property type="entry name" value="Adenylosucc_synth"/>
    <property type="match status" value="1"/>
</dbReference>
<dbReference type="InterPro" id="IPR018220">
    <property type="entry name" value="Adenylosuccin_syn_GTP-bd"/>
</dbReference>
<dbReference type="InterPro" id="IPR033128">
    <property type="entry name" value="Adenylosuccin_syn_Lys_AS"/>
</dbReference>
<dbReference type="InterPro" id="IPR042109">
    <property type="entry name" value="Adenylosuccinate_synth_dom1"/>
</dbReference>
<dbReference type="InterPro" id="IPR042110">
    <property type="entry name" value="Adenylosuccinate_synth_dom2"/>
</dbReference>
<dbReference type="InterPro" id="IPR042111">
    <property type="entry name" value="Adenylosuccinate_synth_dom3"/>
</dbReference>
<dbReference type="InterPro" id="IPR001114">
    <property type="entry name" value="Adenylosuccinate_synthetase"/>
</dbReference>
<dbReference type="InterPro" id="IPR027417">
    <property type="entry name" value="P-loop_NTPase"/>
</dbReference>
<dbReference type="NCBIfam" id="NF002223">
    <property type="entry name" value="PRK01117.1"/>
    <property type="match status" value="1"/>
</dbReference>
<dbReference type="NCBIfam" id="TIGR00184">
    <property type="entry name" value="purA"/>
    <property type="match status" value="1"/>
</dbReference>
<dbReference type="PANTHER" id="PTHR11846">
    <property type="entry name" value="ADENYLOSUCCINATE SYNTHETASE"/>
    <property type="match status" value="1"/>
</dbReference>
<dbReference type="PANTHER" id="PTHR11846:SF0">
    <property type="entry name" value="ADENYLOSUCCINATE SYNTHETASE"/>
    <property type="match status" value="1"/>
</dbReference>
<dbReference type="Pfam" id="PF00709">
    <property type="entry name" value="Adenylsucc_synt"/>
    <property type="match status" value="1"/>
</dbReference>
<dbReference type="SMART" id="SM00788">
    <property type="entry name" value="Adenylsucc_synt"/>
    <property type="match status" value="1"/>
</dbReference>
<dbReference type="SUPFAM" id="SSF52540">
    <property type="entry name" value="P-loop containing nucleoside triphosphate hydrolases"/>
    <property type="match status" value="1"/>
</dbReference>
<dbReference type="PROSITE" id="PS01266">
    <property type="entry name" value="ADENYLOSUCCIN_SYN_1"/>
    <property type="match status" value="1"/>
</dbReference>
<dbReference type="PROSITE" id="PS00513">
    <property type="entry name" value="ADENYLOSUCCIN_SYN_2"/>
    <property type="match status" value="1"/>
</dbReference>
<name>PURA_NEIMF</name>
<protein>
    <recommendedName>
        <fullName evidence="1">Adenylosuccinate synthetase</fullName>
        <shortName evidence="1">AMPSase</shortName>
        <shortName evidence="1">AdSS</shortName>
        <ecNumber evidence="1">6.3.4.4</ecNumber>
    </recommendedName>
    <alternativeName>
        <fullName evidence="1">IMP--aspartate ligase</fullName>
    </alternativeName>
</protein>
<evidence type="ECO:0000255" key="1">
    <source>
        <dbReference type="HAMAP-Rule" id="MF_00011"/>
    </source>
</evidence>
<accession>A1KT71</accession>
<proteinExistence type="inferred from homology"/>
<gene>
    <name evidence="1" type="primary">purA</name>
    <name type="ordered locus">NMC0765</name>
</gene>
<keyword id="KW-0963">Cytoplasm</keyword>
<keyword id="KW-0342">GTP-binding</keyword>
<keyword id="KW-0436">Ligase</keyword>
<keyword id="KW-0460">Magnesium</keyword>
<keyword id="KW-0479">Metal-binding</keyword>
<keyword id="KW-0547">Nucleotide-binding</keyword>
<keyword id="KW-0658">Purine biosynthesis</keyword>
<organism>
    <name type="scientific">Neisseria meningitidis serogroup C / serotype 2a (strain ATCC 700532 / DSM 15464 / FAM18)</name>
    <dbReference type="NCBI Taxonomy" id="272831"/>
    <lineage>
        <taxon>Bacteria</taxon>
        <taxon>Pseudomonadati</taxon>
        <taxon>Pseudomonadota</taxon>
        <taxon>Betaproteobacteria</taxon>
        <taxon>Neisseriales</taxon>
        <taxon>Neisseriaceae</taxon>
        <taxon>Neisseria</taxon>
    </lineage>
</organism>
<reference key="1">
    <citation type="journal article" date="2007" name="PLoS Genet.">
        <title>Meningococcal genetic variation mechanisms viewed through comparative analysis of serogroup C strain FAM18.</title>
        <authorList>
            <person name="Bentley S.D."/>
            <person name="Vernikos G.S."/>
            <person name="Snyder L.A.S."/>
            <person name="Churcher C."/>
            <person name="Arrowsmith C."/>
            <person name="Chillingworth T."/>
            <person name="Cronin A."/>
            <person name="Davis P.H."/>
            <person name="Holroyd N.E."/>
            <person name="Jagels K."/>
            <person name="Maddison M."/>
            <person name="Moule S."/>
            <person name="Rabbinowitsch E."/>
            <person name="Sharp S."/>
            <person name="Unwin L."/>
            <person name="Whitehead S."/>
            <person name="Quail M.A."/>
            <person name="Achtman M."/>
            <person name="Barrell B.G."/>
            <person name="Saunders N.J."/>
            <person name="Parkhill J."/>
        </authorList>
    </citation>
    <scope>NUCLEOTIDE SEQUENCE [LARGE SCALE GENOMIC DNA]</scope>
    <source>
        <strain>ATCC 700532 / DSM 15464 / FAM18</strain>
    </source>
</reference>
<feature type="chain" id="PRO_1000000876" description="Adenylosuccinate synthetase">
    <location>
        <begin position="1"/>
        <end position="434"/>
    </location>
</feature>
<feature type="active site" description="Proton acceptor" evidence="1">
    <location>
        <position position="16"/>
    </location>
</feature>
<feature type="active site" description="Proton donor" evidence="1">
    <location>
        <position position="44"/>
    </location>
</feature>
<feature type="binding site" evidence="1">
    <location>
        <begin position="15"/>
        <end position="21"/>
    </location>
    <ligand>
        <name>GTP</name>
        <dbReference type="ChEBI" id="CHEBI:37565"/>
    </ligand>
</feature>
<feature type="binding site" description="in other chain" evidence="1">
    <location>
        <begin position="16"/>
        <end position="19"/>
    </location>
    <ligand>
        <name>IMP</name>
        <dbReference type="ChEBI" id="CHEBI:58053"/>
        <note>ligand shared between dimeric partners</note>
    </ligand>
</feature>
<feature type="binding site" evidence="1">
    <location>
        <position position="16"/>
    </location>
    <ligand>
        <name>Mg(2+)</name>
        <dbReference type="ChEBI" id="CHEBI:18420"/>
    </ligand>
</feature>
<feature type="binding site" description="in other chain" evidence="1">
    <location>
        <begin position="41"/>
        <end position="44"/>
    </location>
    <ligand>
        <name>IMP</name>
        <dbReference type="ChEBI" id="CHEBI:58053"/>
        <note>ligand shared between dimeric partners</note>
    </ligand>
</feature>
<feature type="binding site" evidence="1">
    <location>
        <begin position="43"/>
        <end position="45"/>
    </location>
    <ligand>
        <name>GTP</name>
        <dbReference type="ChEBI" id="CHEBI:37565"/>
    </ligand>
</feature>
<feature type="binding site" evidence="1">
    <location>
        <position position="43"/>
    </location>
    <ligand>
        <name>Mg(2+)</name>
        <dbReference type="ChEBI" id="CHEBI:18420"/>
    </ligand>
</feature>
<feature type="binding site" description="in other chain" evidence="1">
    <location>
        <position position="133"/>
    </location>
    <ligand>
        <name>IMP</name>
        <dbReference type="ChEBI" id="CHEBI:58053"/>
        <note>ligand shared between dimeric partners</note>
    </ligand>
</feature>
<feature type="binding site" evidence="1">
    <location>
        <position position="147"/>
    </location>
    <ligand>
        <name>IMP</name>
        <dbReference type="ChEBI" id="CHEBI:58053"/>
        <note>ligand shared between dimeric partners</note>
    </ligand>
</feature>
<feature type="binding site" description="in other chain" evidence="1">
    <location>
        <position position="228"/>
    </location>
    <ligand>
        <name>IMP</name>
        <dbReference type="ChEBI" id="CHEBI:58053"/>
        <note>ligand shared between dimeric partners</note>
    </ligand>
</feature>
<feature type="binding site" description="in other chain" evidence="1">
    <location>
        <position position="243"/>
    </location>
    <ligand>
        <name>IMP</name>
        <dbReference type="ChEBI" id="CHEBI:58053"/>
        <note>ligand shared between dimeric partners</note>
    </ligand>
</feature>
<feature type="binding site" evidence="1">
    <location>
        <begin position="303"/>
        <end position="309"/>
    </location>
    <ligand>
        <name>substrate</name>
    </ligand>
</feature>
<feature type="binding site" description="in other chain" evidence="1">
    <location>
        <position position="307"/>
    </location>
    <ligand>
        <name>IMP</name>
        <dbReference type="ChEBI" id="CHEBI:58053"/>
        <note>ligand shared between dimeric partners</note>
    </ligand>
</feature>
<feature type="binding site" evidence="1">
    <location>
        <position position="309"/>
    </location>
    <ligand>
        <name>GTP</name>
        <dbReference type="ChEBI" id="CHEBI:37565"/>
    </ligand>
</feature>
<feature type="binding site" evidence="1">
    <location>
        <begin position="335"/>
        <end position="337"/>
    </location>
    <ligand>
        <name>GTP</name>
        <dbReference type="ChEBI" id="CHEBI:37565"/>
    </ligand>
</feature>
<feature type="binding site" evidence="1">
    <location>
        <begin position="418"/>
        <end position="420"/>
    </location>
    <ligand>
        <name>GTP</name>
        <dbReference type="ChEBI" id="CHEBI:37565"/>
    </ligand>
</feature>